<accession>Q9YBE9</accession>
<feature type="chain" id="PRO_0000089228" description="Uncharacterized protein APE_1648.1">
    <location>
        <begin position="1"/>
        <end position="189"/>
    </location>
</feature>
<feature type="domain" description="Macro" evidence="1">
    <location>
        <begin position="1"/>
        <end position="174"/>
    </location>
</feature>
<name>Y1648_AERPE</name>
<protein>
    <recommendedName>
        <fullName>Uncharacterized protein APE_1648.1</fullName>
    </recommendedName>
</protein>
<reference key="1">
    <citation type="journal article" date="1999" name="DNA Res.">
        <title>Complete genome sequence of an aerobic hyper-thermophilic crenarchaeon, Aeropyrum pernix K1.</title>
        <authorList>
            <person name="Kawarabayasi Y."/>
            <person name="Hino Y."/>
            <person name="Horikawa H."/>
            <person name="Yamazaki S."/>
            <person name="Haikawa Y."/>
            <person name="Jin-no K."/>
            <person name="Takahashi M."/>
            <person name="Sekine M."/>
            <person name="Baba S."/>
            <person name="Ankai A."/>
            <person name="Kosugi H."/>
            <person name="Hosoyama A."/>
            <person name="Fukui S."/>
            <person name="Nagai Y."/>
            <person name="Nishijima K."/>
            <person name="Nakazawa H."/>
            <person name="Takamiya M."/>
            <person name="Masuda S."/>
            <person name="Funahashi T."/>
            <person name="Tanaka T."/>
            <person name="Kudoh Y."/>
            <person name="Yamazaki J."/>
            <person name="Kushida N."/>
            <person name="Oguchi A."/>
            <person name="Aoki K."/>
            <person name="Kubota K."/>
            <person name="Nakamura Y."/>
            <person name="Nomura N."/>
            <person name="Sako Y."/>
            <person name="Kikuchi H."/>
        </authorList>
    </citation>
    <scope>NUCLEOTIDE SEQUENCE [LARGE SCALE GENOMIC DNA]</scope>
    <source>
        <strain>ATCC 700893 / DSM 11879 / JCM 9820 / NBRC 100138 / K1</strain>
    </source>
</reference>
<organism>
    <name type="scientific">Aeropyrum pernix (strain ATCC 700893 / DSM 11879 / JCM 9820 / NBRC 100138 / K1)</name>
    <dbReference type="NCBI Taxonomy" id="272557"/>
    <lineage>
        <taxon>Archaea</taxon>
        <taxon>Thermoproteota</taxon>
        <taxon>Thermoprotei</taxon>
        <taxon>Desulfurococcales</taxon>
        <taxon>Desulfurococcaceae</taxon>
        <taxon>Aeropyrum</taxon>
    </lineage>
</organism>
<keyword id="KW-1185">Reference proteome</keyword>
<sequence>MKCWTLGDRVLAVSMGDLTKVRAEAVVNPANSLMIMGGGAAGALKRAGGSVIEEEAMRKAPVPVGEAVITSGGSLPARFVIHAPTMEEPGMRIPLVNAFKASYAALRLASEAGIESVAMPAMGAGVGGLSVAEVAREAAMAASILRGKWPRYIILVARGEEAYRGMEKGVREALGVEGGECPADLARLV</sequence>
<evidence type="ECO:0000255" key="1">
    <source>
        <dbReference type="PROSITE-ProRule" id="PRU00490"/>
    </source>
</evidence>
<proteinExistence type="predicted"/>
<dbReference type="EMBL" id="BA000002">
    <property type="protein sequence ID" value="BAA80649.2"/>
    <property type="molecule type" value="Genomic_DNA"/>
</dbReference>
<dbReference type="PIR" id="D72545">
    <property type="entry name" value="D72545"/>
</dbReference>
<dbReference type="RefSeq" id="WP_010866508.1">
    <property type="nucleotide sequence ID" value="NC_000854.2"/>
</dbReference>
<dbReference type="SMR" id="Q9YBE9"/>
<dbReference type="STRING" id="272557.APE_1648.1"/>
<dbReference type="EnsemblBacteria" id="BAA80649">
    <property type="protein sequence ID" value="BAA80649"/>
    <property type="gene ID" value="APE_1648.1"/>
</dbReference>
<dbReference type="GeneID" id="1446150"/>
<dbReference type="KEGG" id="ape:APE_1648.1"/>
<dbReference type="eggNOG" id="arCOG04225">
    <property type="taxonomic scope" value="Archaea"/>
</dbReference>
<dbReference type="Proteomes" id="UP000002518">
    <property type="component" value="Chromosome"/>
</dbReference>
<dbReference type="Gene3D" id="3.40.220.10">
    <property type="entry name" value="Leucine Aminopeptidase, subunit E, domain 1"/>
    <property type="match status" value="1"/>
</dbReference>
<dbReference type="InterPro" id="IPR002589">
    <property type="entry name" value="Macro_dom"/>
</dbReference>
<dbReference type="InterPro" id="IPR043472">
    <property type="entry name" value="Macro_dom-like"/>
</dbReference>
<dbReference type="PANTHER" id="PTHR11106">
    <property type="entry name" value="GANGLIOSIDE INDUCED DIFFERENTIATION ASSOCIATED PROTEIN 2-RELATED"/>
    <property type="match status" value="1"/>
</dbReference>
<dbReference type="PANTHER" id="PTHR11106:SF111">
    <property type="entry name" value="MACRO DOMAIN-CONTAINING PROTEIN"/>
    <property type="match status" value="1"/>
</dbReference>
<dbReference type="Pfam" id="PF01661">
    <property type="entry name" value="Macro"/>
    <property type="match status" value="1"/>
</dbReference>
<dbReference type="SMART" id="SM00506">
    <property type="entry name" value="A1pp"/>
    <property type="match status" value="1"/>
</dbReference>
<dbReference type="SUPFAM" id="SSF52949">
    <property type="entry name" value="Macro domain-like"/>
    <property type="match status" value="1"/>
</dbReference>
<dbReference type="PROSITE" id="PS51154">
    <property type="entry name" value="MACRO"/>
    <property type="match status" value="1"/>
</dbReference>
<gene>
    <name type="ordered locus">APE_1648.1</name>
</gene>